<name>TAMA_ECO57</name>
<evidence type="ECO:0000250" key="1">
    <source>
        <dbReference type="UniProtKB" id="P0ADE4"/>
    </source>
</evidence>
<evidence type="ECO:0000255" key="2"/>
<evidence type="ECO:0000255" key="3">
    <source>
        <dbReference type="PROSITE-ProRule" id="PRU01115"/>
    </source>
</evidence>
<evidence type="ECO:0000305" key="4"/>
<keyword id="KW-0998">Cell outer membrane</keyword>
<keyword id="KW-0472">Membrane</keyword>
<keyword id="KW-1185">Reference proteome</keyword>
<keyword id="KW-0732">Signal</keyword>
<keyword id="KW-0812">Transmembrane</keyword>
<keyword id="KW-1134">Transmembrane beta strand</keyword>
<accession>P0ADE5</accession>
<accession>P39320</accession>
<gene>
    <name type="primary">tamA</name>
    <name type="ordered locus">Z5831</name>
    <name type="ordered locus">ECs5198</name>
</gene>
<feature type="signal peptide" evidence="2">
    <location>
        <begin position="1"/>
        <end position="21"/>
    </location>
</feature>
<feature type="chain" id="PRO_0000043227" description="Translocation and assembly module subunit TamA">
    <location>
        <begin position="22"/>
        <end position="577"/>
    </location>
</feature>
<feature type="transmembrane region" description="Beta stranded" evidence="1">
    <location>
        <begin position="265"/>
        <end position="276"/>
    </location>
</feature>
<feature type="transmembrane region" description="Beta stranded" evidence="1">
    <location>
        <begin position="279"/>
        <end position="288"/>
    </location>
</feature>
<feature type="transmembrane region" description="Beta stranded" evidence="1">
    <location>
        <begin position="297"/>
        <end position="306"/>
    </location>
</feature>
<feature type="transmembrane region" description="Beta stranded" evidence="1">
    <location>
        <begin position="309"/>
        <end position="317"/>
    </location>
</feature>
<feature type="transmembrane region" description="Beta stranded" evidence="1">
    <location>
        <begin position="327"/>
        <end position="336"/>
    </location>
</feature>
<feature type="transmembrane region" description="Beta stranded" evidence="1">
    <location>
        <begin position="347"/>
        <end position="356"/>
    </location>
</feature>
<feature type="transmembrane region" description="Beta stranded" evidence="1">
    <location>
        <begin position="361"/>
        <end position="370"/>
    </location>
</feature>
<feature type="transmembrane region" description="Beta stranded" evidence="1">
    <location>
        <begin position="387"/>
        <end position="395"/>
    </location>
</feature>
<feature type="transmembrane region" description="Beta stranded" evidence="1">
    <location>
        <begin position="406"/>
        <end position="415"/>
    </location>
</feature>
<feature type="transmembrane region" description="Beta stranded" evidence="1">
    <location>
        <begin position="428"/>
        <end position="437"/>
    </location>
</feature>
<feature type="transmembrane region" description="Beta stranded" evidence="1">
    <location>
        <begin position="444"/>
        <end position="453"/>
    </location>
</feature>
<feature type="transmembrane region" description="Beta stranded" evidence="1">
    <location>
        <begin position="500"/>
        <end position="508"/>
    </location>
</feature>
<feature type="transmembrane region" description="Beta stranded" evidence="1">
    <location>
        <begin position="514"/>
        <end position="523"/>
    </location>
</feature>
<feature type="transmembrane region" description="Beta stranded" evidence="1">
    <location>
        <begin position="536"/>
        <end position="545"/>
    </location>
</feature>
<feature type="transmembrane region" description="Beta stranded" evidence="1">
    <location>
        <begin position="549"/>
        <end position="557"/>
    </location>
</feature>
<feature type="transmembrane region" description="Beta stranded" evidence="1">
    <location>
        <begin position="568"/>
        <end position="577"/>
    </location>
</feature>
<feature type="domain" description="POTRA" evidence="3">
    <location>
        <begin position="187"/>
        <end position="263"/>
    </location>
</feature>
<proteinExistence type="inferred from homology"/>
<reference key="1">
    <citation type="journal article" date="2001" name="Nature">
        <title>Genome sequence of enterohaemorrhagic Escherichia coli O157:H7.</title>
        <authorList>
            <person name="Perna N.T."/>
            <person name="Plunkett G. III"/>
            <person name="Burland V."/>
            <person name="Mau B."/>
            <person name="Glasner J.D."/>
            <person name="Rose D.J."/>
            <person name="Mayhew G.F."/>
            <person name="Evans P.S."/>
            <person name="Gregor J."/>
            <person name="Kirkpatrick H.A."/>
            <person name="Posfai G."/>
            <person name="Hackett J."/>
            <person name="Klink S."/>
            <person name="Boutin A."/>
            <person name="Shao Y."/>
            <person name="Miller L."/>
            <person name="Grotbeck E.J."/>
            <person name="Davis N.W."/>
            <person name="Lim A."/>
            <person name="Dimalanta E.T."/>
            <person name="Potamousis K."/>
            <person name="Apodaca J."/>
            <person name="Anantharaman T.S."/>
            <person name="Lin J."/>
            <person name="Yen G."/>
            <person name="Schwartz D.C."/>
            <person name="Welch R.A."/>
            <person name="Blattner F.R."/>
        </authorList>
    </citation>
    <scope>NUCLEOTIDE SEQUENCE [LARGE SCALE GENOMIC DNA]</scope>
    <source>
        <strain>O157:H7 / EDL933 / ATCC 700927 / EHEC</strain>
    </source>
</reference>
<reference key="2">
    <citation type="journal article" date="2001" name="DNA Res.">
        <title>Complete genome sequence of enterohemorrhagic Escherichia coli O157:H7 and genomic comparison with a laboratory strain K-12.</title>
        <authorList>
            <person name="Hayashi T."/>
            <person name="Makino K."/>
            <person name="Ohnishi M."/>
            <person name="Kurokawa K."/>
            <person name="Ishii K."/>
            <person name="Yokoyama K."/>
            <person name="Han C.-G."/>
            <person name="Ohtsubo E."/>
            <person name="Nakayama K."/>
            <person name="Murata T."/>
            <person name="Tanaka M."/>
            <person name="Tobe T."/>
            <person name="Iida T."/>
            <person name="Takami H."/>
            <person name="Honda T."/>
            <person name="Sasakawa C."/>
            <person name="Ogasawara N."/>
            <person name="Yasunaga T."/>
            <person name="Kuhara S."/>
            <person name="Shiba T."/>
            <person name="Hattori M."/>
            <person name="Shinagawa H."/>
        </authorList>
    </citation>
    <scope>NUCLEOTIDE SEQUENCE [LARGE SCALE GENOMIC DNA]</scope>
    <source>
        <strain>O157:H7 / Sakai / RIMD 0509952 / EHEC</strain>
    </source>
</reference>
<protein>
    <recommendedName>
        <fullName evidence="1">Translocation and assembly module subunit TamA</fullName>
    </recommendedName>
    <alternativeName>
        <fullName>Autotransporter assembly factor TamA</fullName>
    </alternativeName>
</protein>
<organism>
    <name type="scientific">Escherichia coli O157:H7</name>
    <dbReference type="NCBI Taxonomy" id="83334"/>
    <lineage>
        <taxon>Bacteria</taxon>
        <taxon>Pseudomonadati</taxon>
        <taxon>Pseudomonadota</taxon>
        <taxon>Gammaproteobacteria</taxon>
        <taxon>Enterobacterales</taxon>
        <taxon>Enterobacteriaceae</taxon>
        <taxon>Escherichia</taxon>
    </lineage>
</organism>
<sequence length="577" mass="64796">MRYIRQLCCVSLLCLSGSAVAANVRLQVEGLSGQLEKNVRAQLSTIESDEVTPDRRFRARVDDAIREGLKALGYYQPTIEFDLRPPPKKGRQVLIAKVTPGVPVLIGGTDVVLRGGARTDKDYLKLLDTRPAIGTVLNQGDYENFKKSLTSIALRKGYFDSEFTKAQLGIALGLHKAFWDIDYNSGERYRFGHVTFEGSQIRDEYLQNLVPFKEGDEYESKDLAELNRRLSATGWFNSVVVAPQFDKARETKVLPLTGVVSPRTENTIETGVGYSTDVGPRVKATWKKPWMNSYGHSLTTSTSISAPEQTLDFSYKMPLLKNPLEQYYLVQGGFKRTDLNDTESDSTTLVASRYWDLSSGWQRAINLRWSLDHFTQGEITNTTMLFYPGVMISRTRSRGGLMPTWGDSQRYSIDYSNTAWGSDVDFSVFQAQNVWIRTLYDRHRFVTRGTLGWIETGDFDKVPPDLRFFAGGDRSIRGYKYKSIAPKYANGDLKGASKLITGSLEYQYNVTGKWWGAVFVDSGEAVSDIRRSDFKTGTGVGVRWESPVGPIKLDFAVPVADKDEHGLQFYIGLGPEL</sequence>
<dbReference type="EMBL" id="AE005174">
    <property type="protein sequence ID" value="AAG59418.1"/>
    <property type="molecule type" value="Genomic_DNA"/>
</dbReference>
<dbReference type="EMBL" id="BA000007">
    <property type="protein sequence ID" value="BAB38621.1"/>
    <property type="molecule type" value="Genomic_DNA"/>
</dbReference>
<dbReference type="PIR" id="F91278">
    <property type="entry name" value="F91278"/>
</dbReference>
<dbReference type="RefSeq" id="NP_313225.1">
    <property type="nucleotide sequence ID" value="NC_002695.1"/>
</dbReference>
<dbReference type="RefSeq" id="WP_001269327.1">
    <property type="nucleotide sequence ID" value="NZ_VOAI01000023.1"/>
</dbReference>
<dbReference type="BMRB" id="P0ADE5"/>
<dbReference type="SMR" id="P0ADE5"/>
<dbReference type="STRING" id="155864.Z5831"/>
<dbReference type="GeneID" id="75202460"/>
<dbReference type="GeneID" id="913933"/>
<dbReference type="KEGG" id="ece:Z5831"/>
<dbReference type="KEGG" id="ecs:ECs_5198"/>
<dbReference type="PATRIC" id="fig|386585.9.peg.5435"/>
<dbReference type="eggNOG" id="COG0729">
    <property type="taxonomic scope" value="Bacteria"/>
</dbReference>
<dbReference type="HOGENOM" id="CLU_018618_1_0_6"/>
<dbReference type="OMA" id="NTTMLLY"/>
<dbReference type="Proteomes" id="UP000000558">
    <property type="component" value="Chromosome"/>
</dbReference>
<dbReference type="Proteomes" id="UP000002519">
    <property type="component" value="Chromosome"/>
</dbReference>
<dbReference type="GO" id="GO:0009279">
    <property type="term" value="C:cell outer membrane"/>
    <property type="evidence" value="ECO:0007669"/>
    <property type="project" value="UniProtKB-SubCell"/>
</dbReference>
<dbReference type="GO" id="GO:0097347">
    <property type="term" value="C:TAM protein secretion complex"/>
    <property type="evidence" value="ECO:0007669"/>
    <property type="project" value="TreeGrafter"/>
</dbReference>
<dbReference type="GO" id="GO:0009306">
    <property type="term" value="P:protein secretion"/>
    <property type="evidence" value="ECO:0007669"/>
    <property type="project" value="TreeGrafter"/>
</dbReference>
<dbReference type="FunFam" id="2.40.160.50:FF:000003">
    <property type="entry name" value="Outer membrane protein, OMP85 family"/>
    <property type="match status" value="1"/>
</dbReference>
<dbReference type="FunFam" id="3.10.20.310:FF:000007">
    <property type="entry name" value="Outer membrane protein, OMP85 family"/>
    <property type="match status" value="1"/>
</dbReference>
<dbReference type="FunFam" id="3.10.20.310:FF:000008">
    <property type="entry name" value="Outer membrane protein, OMP85 family"/>
    <property type="match status" value="1"/>
</dbReference>
<dbReference type="FunFam" id="3.10.20.310:FF:000009">
    <property type="entry name" value="Outer membrane protein, OMP85 family"/>
    <property type="match status" value="1"/>
</dbReference>
<dbReference type="Gene3D" id="3.10.20.310">
    <property type="entry name" value="membrane protein fhac"/>
    <property type="match status" value="3"/>
</dbReference>
<dbReference type="Gene3D" id="2.40.160.50">
    <property type="entry name" value="membrane protein fhac: a member of the omp85/tpsb transporter family"/>
    <property type="match status" value="1"/>
</dbReference>
<dbReference type="InterPro" id="IPR000184">
    <property type="entry name" value="Bac_surfAg_D15"/>
</dbReference>
<dbReference type="InterPro" id="IPR010827">
    <property type="entry name" value="BamA/TamA_POTRA"/>
</dbReference>
<dbReference type="InterPro" id="IPR039910">
    <property type="entry name" value="D15-like"/>
</dbReference>
<dbReference type="InterPro" id="IPR034746">
    <property type="entry name" value="POTRA"/>
</dbReference>
<dbReference type="InterPro" id="IPR035243">
    <property type="entry name" value="TamA_POTRA_Dom_1"/>
</dbReference>
<dbReference type="PANTHER" id="PTHR12815">
    <property type="entry name" value="SORTING AND ASSEMBLY MACHINERY SAMM50 PROTEIN FAMILY MEMBER"/>
    <property type="match status" value="1"/>
</dbReference>
<dbReference type="PANTHER" id="PTHR12815:SF47">
    <property type="entry name" value="TRANSLOCATION AND ASSEMBLY MODULE SUBUNIT TAMA"/>
    <property type="match status" value="1"/>
</dbReference>
<dbReference type="Pfam" id="PF01103">
    <property type="entry name" value="Omp85"/>
    <property type="match status" value="1"/>
</dbReference>
<dbReference type="Pfam" id="PF07244">
    <property type="entry name" value="POTRA"/>
    <property type="match status" value="1"/>
</dbReference>
<dbReference type="Pfam" id="PF17243">
    <property type="entry name" value="POTRA_TamA_1"/>
    <property type="match status" value="1"/>
</dbReference>
<dbReference type="PROSITE" id="PS51779">
    <property type="entry name" value="POTRA"/>
    <property type="match status" value="1"/>
</dbReference>
<comment type="function">
    <text evidence="1">Component of the translocation and assembly module (TAM), which facilitates the insertion and assembly of specific beta-barrel proteins into the outer membrane.</text>
</comment>
<comment type="subunit">
    <text evidence="1">Interacts with TamB to form the translocation and assembly module (TAM).</text>
</comment>
<comment type="subcellular location">
    <subcellularLocation>
        <location evidence="1">Cell outer membrane</location>
    </subcellularLocation>
</comment>
<comment type="similarity">
    <text evidence="4">Belongs to the TamA family.</text>
</comment>